<evidence type="ECO:0000255" key="1">
    <source>
        <dbReference type="HAMAP-Rule" id="MF_00532"/>
    </source>
</evidence>
<evidence type="ECO:0000256" key="2">
    <source>
        <dbReference type="SAM" id="MobiDB-lite"/>
    </source>
</evidence>
<evidence type="ECO:0000305" key="3"/>
<accession>A0ALT2</accession>
<dbReference type="EMBL" id="AM263198">
    <property type="protein sequence ID" value="CAK21964.1"/>
    <property type="molecule type" value="Genomic_DNA"/>
</dbReference>
<dbReference type="RefSeq" id="WP_003749666.1">
    <property type="nucleotide sequence ID" value="NC_008555.1"/>
</dbReference>
<dbReference type="SMR" id="A0ALT2"/>
<dbReference type="STRING" id="386043.lwe2546"/>
<dbReference type="GeneID" id="87012881"/>
<dbReference type="KEGG" id="lwe:lwe2546"/>
<dbReference type="eggNOG" id="COG0103">
    <property type="taxonomic scope" value="Bacteria"/>
</dbReference>
<dbReference type="HOGENOM" id="CLU_046483_2_1_9"/>
<dbReference type="OrthoDB" id="9803965at2"/>
<dbReference type="Proteomes" id="UP000000779">
    <property type="component" value="Chromosome"/>
</dbReference>
<dbReference type="GO" id="GO:0022627">
    <property type="term" value="C:cytosolic small ribosomal subunit"/>
    <property type="evidence" value="ECO:0007669"/>
    <property type="project" value="TreeGrafter"/>
</dbReference>
<dbReference type="GO" id="GO:0003723">
    <property type="term" value="F:RNA binding"/>
    <property type="evidence" value="ECO:0007669"/>
    <property type="project" value="TreeGrafter"/>
</dbReference>
<dbReference type="GO" id="GO:0003735">
    <property type="term" value="F:structural constituent of ribosome"/>
    <property type="evidence" value="ECO:0007669"/>
    <property type="project" value="InterPro"/>
</dbReference>
<dbReference type="GO" id="GO:0006412">
    <property type="term" value="P:translation"/>
    <property type="evidence" value="ECO:0007669"/>
    <property type="project" value="UniProtKB-UniRule"/>
</dbReference>
<dbReference type="FunFam" id="3.30.230.10:FF:000001">
    <property type="entry name" value="30S ribosomal protein S9"/>
    <property type="match status" value="1"/>
</dbReference>
<dbReference type="Gene3D" id="3.30.230.10">
    <property type="match status" value="1"/>
</dbReference>
<dbReference type="HAMAP" id="MF_00532_B">
    <property type="entry name" value="Ribosomal_uS9_B"/>
    <property type="match status" value="1"/>
</dbReference>
<dbReference type="InterPro" id="IPR020568">
    <property type="entry name" value="Ribosomal_Su5_D2-typ_SF"/>
</dbReference>
<dbReference type="InterPro" id="IPR000754">
    <property type="entry name" value="Ribosomal_uS9"/>
</dbReference>
<dbReference type="InterPro" id="IPR023035">
    <property type="entry name" value="Ribosomal_uS9_bac/plastid"/>
</dbReference>
<dbReference type="InterPro" id="IPR020574">
    <property type="entry name" value="Ribosomal_uS9_CS"/>
</dbReference>
<dbReference type="InterPro" id="IPR014721">
    <property type="entry name" value="Ribsml_uS5_D2-typ_fold_subgr"/>
</dbReference>
<dbReference type="NCBIfam" id="NF001099">
    <property type="entry name" value="PRK00132.1"/>
    <property type="match status" value="1"/>
</dbReference>
<dbReference type="PANTHER" id="PTHR21569">
    <property type="entry name" value="RIBOSOMAL PROTEIN S9"/>
    <property type="match status" value="1"/>
</dbReference>
<dbReference type="PANTHER" id="PTHR21569:SF1">
    <property type="entry name" value="SMALL RIBOSOMAL SUBUNIT PROTEIN US9M"/>
    <property type="match status" value="1"/>
</dbReference>
<dbReference type="Pfam" id="PF00380">
    <property type="entry name" value="Ribosomal_S9"/>
    <property type="match status" value="1"/>
</dbReference>
<dbReference type="SUPFAM" id="SSF54211">
    <property type="entry name" value="Ribosomal protein S5 domain 2-like"/>
    <property type="match status" value="1"/>
</dbReference>
<dbReference type="PROSITE" id="PS00360">
    <property type="entry name" value="RIBOSOMAL_S9"/>
    <property type="match status" value="1"/>
</dbReference>
<sequence>MAQVQYYGTGRRKSSVARVRLVPGDGKIVINNRDWEDYIPFAALREVIKQPLVATETLGNYDVLVNVRGGGYTGQAGAIRHGVARALLQVAPEYRPALKSAGLLTRDSRMKERKKPGLKGARRAPQFSKR</sequence>
<name>RS9_LISW6</name>
<protein>
    <recommendedName>
        <fullName evidence="1">Small ribosomal subunit protein uS9</fullName>
    </recommendedName>
    <alternativeName>
        <fullName evidence="3">30S ribosomal protein S9</fullName>
    </alternativeName>
</protein>
<comment type="similarity">
    <text evidence="1">Belongs to the universal ribosomal protein uS9 family.</text>
</comment>
<organism>
    <name type="scientific">Listeria welshimeri serovar 6b (strain ATCC 35897 / DSM 20650 / CCUG 15529 / CIP 8149 / NCTC 11857 / SLCC 5334 / V8)</name>
    <dbReference type="NCBI Taxonomy" id="386043"/>
    <lineage>
        <taxon>Bacteria</taxon>
        <taxon>Bacillati</taxon>
        <taxon>Bacillota</taxon>
        <taxon>Bacilli</taxon>
        <taxon>Bacillales</taxon>
        <taxon>Listeriaceae</taxon>
        <taxon>Listeria</taxon>
    </lineage>
</organism>
<proteinExistence type="inferred from homology"/>
<keyword id="KW-0687">Ribonucleoprotein</keyword>
<keyword id="KW-0689">Ribosomal protein</keyword>
<feature type="chain" id="PRO_1000051247" description="Small ribosomal subunit protein uS9">
    <location>
        <begin position="1"/>
        <end position="130"/>
    </location>
</feature>
<feature type="region of interest" description="Disordered" evidence="2">
    <location>
        <begin position="105"/>
        <end position="130"/>
    </location>
</feature>
<feature type="compositionally biased region" description="Basic residues" evidence="2">
    <location>
        <begin position="111"/>
        <end position="130"/>
    </location>
</feature>
<gene>
    <name evidence="1" type="primary">rpsI</name>
    <name type="ordered locus">lwe2546</name>
</gene>
<reference key="1">
    <citation type="journal article" date="2006" name="J. Bacteriol.">
        <title>Whole-genome sequence of Listeria welshimeri reveals common steps in genome reduction with Listeria innocua as compared to Listeria monocytogenes.</title>
        <authorList>
            <person name="Hain T."/>
            <person name="Steinweg C."/>
            <person name="Kuenne C.T."/>
            <person name="Billion A."/>
            <person name="Ghai R."/>
            <person name="Chatterjee S.S."/>
            <person name="Domann E."/>
            <person name="Kaerst U."/>
            <person name="Goesmann A."/>
            <person name="Bekel T."/>
            <person name="Bartels D."/>
            <person name="Kaiser O."/>
            <person name="Meyer F."/>
            <person name="Puehler A."/>
            <person name="Weisshaar B."/>
            <person name="Wehland J."/>
            <person name="Liang C."/>
            <person name="Dandekar T."/>
            <person name="Lampidis R."/>
            <person name="Kreft J."/>
            <person name="Goebel W."/>
            <person name="Chakraborty T."/>
        </authorList>
    </citation>
    <scope>NUCLEOTIDE SEQUENCE [LARGE SCALE GENOMIC DNA]</scope>
    <source>
        <strain>ATCC 35897 / DSM 20650 / CCUG 15529 / CIP 8149 / NCTC 11857 / SLCC 5334 / V8</strain>
    </source>
</reference>